<accession>Q07860</accession>
<gene>
    <name evidence="1" type="primary">L1</name>
</gene>
<sequence>MSSWLSTTGKVYLPPAQPVARVLETDEYITGTSLYFHAGTERLLTVGHPYFPVKDVQEPHKVLVPKVSGSQFRVFRFNLPDPNRFALIDNGFYDSDHERLVWKLRGIEIGRGGPLGIGTTGHPLYNKFGDTENPNGYKKQSDDNRQDVSLDPKQTQMFIIGCTPAIGEHWDKAEPCPSPAPQQGDCPPIELVNSYIQDGDMCDIGFGAFNFKALQADKSSAPLDVIATVCKWPDFLKMGKDIYGDSLFFFGRREQLYARHFFVRAGTMGDALPEPFEATSDYFIGAQNQQDQYTLGPHIYVGTPSGSLVSSESQLFNRPYWLNRAQGTNNGICWDNQLFVTLVDNTHNTNFTISVKSDGANDNYQYKASDFKQYLRHIEEFEMEFIFQLCKVPLTADVMAHLNVMNPNILDNWQLNFVPPPPSGIEDQYRFLQSRATRCPTQTPATEKEDPYKDLSFWVVDLSERFSSELSQFSLGRRFLYQSGLINGSLKRKRIISSSHAQTNTKRSAKRKRSLK</sequence>
<organism>
    <name type="scientific">Human papillomavirus 4</name>
    <dbReference type="NCBI Taxonomy" id="10617"/>
    <lineage>
        <taxon>Viruses</taxon>
        <taxon>Monodnaviria</taxon>
        <taxon>Shotokuvirae</taxon>
        <taxon>Cossaviricota</taxon>
        <taxon>Papovaviricetes</taxon>
        <taxon>Zurhausenvirales</taxon>
        <taxon>Papillomaviridae</taxon>
        <taxon>Firstpapillomavirinae</taxon>
        <taxon>Gammapapillomavirus</taxon>
        <taxon>Gammapapillomavirus 1</taxon>
    </lineage>
</organism>
<reference key="1">
    <citation type="journal article" date="1993" name="Virology">
        <title>Two novel types of human papillomavirus, HPV 63 and HPV 65: comparisons of their clinical and histological features and DNA sequences to other HPV types.</title>
        <authorList>
            <person name="Egawa K."/>
            <person name="Delius H."/>
            <person name="Matsukura T."/>
            <person name="Kawashima M."/>
            <person name="de Villiers E.M."/>
        </authorList>
    </citation>
    <scope>NUCLEOTIDE SEQUENCE [GENOMIC DNA]</scope>
</reference>
<comment type="function">
    <text evidence="1">Forms an icosahedral capsid with a T=7 symmetry and a 50 nm diameter. The capsid is composed of 72 pentamers linked to each other by disulfide bonds and associated with L2 proteins. Binds to heparan sulfate proteoglycans on cell surface of basal layer keratinocytes to provide initial virion attachment. This binding mediates a conformational change in the virus capsid that facilitates efficient infection. The virion enters the host cell via endocytosis. During virus trafficking, L1 protein dissociates from the viral DNA and the genomic DNA is released to the host nucleus. The virion assembly takes place within the cell nucleus. Encapsulates the genomic DNA together with protein L2.</text>
</comment>
<comment type="subunit">
    <text evidence="1">Self-assembles into homopentamers. The capsid has an icosahedral symmetry and consists of 72 capsomers, with each capsomer being a pentamer of L1. Interacts with the minor capsid protein L2; this interaction is necessary for viral genome encapsidation. Interacts with protein E2; this interaction enhances E2-dependent replication and transcription activation.</text>
</comment>
<comment type="subcellular location">
    <subcellularLocation>
        <location evidence="1">Virion</location>
    </subcellularLocation>
    <subcellularLocation>
        <location evidence="1">Host nucleus</location>
    </subcellularLocation>
</comment>
<comment type="similarity">
    <text evidence="1">Belongs to the papillomaviridae L1 protein family.</text>
</comment>
<protein>
    <recommendedName>
        <fullName evidence="1">Major capsid protein L1</fullName>
    </recommendedName>
</protein>
<feature type="chain" id="PRO_0000133486" description="Major capsid protein L1">
    <location>
        <begin position="1"/>
        <end position="516"/>
    </location>
</feature>
<feature type="region of interest" description="Disordered" evidence="2">
    <location>
        <begin position="129"/>
        <end position="148"/>
    </location>
</feature>
<feature type="region of interest" description="Disordered" evidence="2">
    <location>
        <begin position="497"/>
        <end position="516"/>
    </location>
</feature>
<feature type="compositionally biased region" description="Basic and acidic residues" evidence="2">
    <location>
        <begin position="139"/>
        <end position="148"/>
    </location>
</feature>
<feature type="compositionally biased region" description="Polar residues" evidence="2">
    <location>
        <begin position="497"/>
        <end position="506"/>
    </location>
</feature>
<feature type="compositionally biased region" description="Basic residues" evidence="2">
    <location>
        <begin position="507"/>
        <end position="516"/>
    </location>
</feature>
<feature type="disulfide bond" description="Interchain (with C-439)" evidence="1">
    <location>
        <position position="176"/>
    </location>
</feature>
<feature type="disulfide bond" description="Interchain (with C-176)" evidence="1">
    <location>
        <position position="439"/>
    </location>
</feature>
<proteinExistence type="inferred from homology"/>
<evidence type="ECO:0000255" key="1">
    <source>
        <dbReference type="HAMAP-Rule" id="MF_04002"/>
    </source>
</evidence>
<evidence type="ECO:0000256" key="2">
    <source>
        <dbReference type="SAM" id="MobiDB-lite"/>
    </source>
</evidence>
<name>VL1_HPV04</name>
<dbReference type="EMBL" id="X70827">
    <property type="protein sequence ID" value="CAA50163.1"/>
    <property type="molecule type" value="Genomic_DNA"/>
</dbReference>
<dbReference type="RefSeq" id="NP_040895.1">
    <property type="nucleotide sequence ID" value="NC_001457.1"/>
</dbReference>
<dbReference type="SMR" id="Q07860"/>
<dbReference type="KEGG" id="vg:1489455"/>
<dbReference type="OrthoDB" id="5037at10239"/>
<dbReference type="Proteomes" id="UP000009253">
    <property type="component" value="Genome"/>
</dbReference>
<dbReference type="GO" id="GO:0042025">
    <property type="term" value="C:host cell nucleus"/>
    <property type="evidence" value="ECO:0007669"/>
    <property type="project" value="UniProtKB-SubCell"/>
</dbReference>
<dbReference type="GO" id="GO:0039620">
    <property type="term" value="C:T=7 icosahedral viral capsid"/>
    <property type="evidence" value="ECO:0007669"/>
    <property type="project" value="UniProtKB-UniRule"/>
</dbReference>
<dbReference type="GO" id="GO:0005198">
    <property type="term" value="F:structural molecule activity"/>
    <property type="evidence" value="ECO:0007669"/>
    <property type="project" value="UniProtKB-UniRule"/>
</dbReference>
<dbReference type="GO" id="GO:0075509">
    <property type="term" value="P:endocytosis involved in viral entry into host cell"/>
    <property type="evidence" value="ECO:0007669"/>
    <property type="project" value="UniProtKB-KW"/>
</dbReference>
<dbReference type="GO" id="GO:0019062">
    <property type="term" value="P:virion attachment to host cell"/>
    <property type="evidence" value="ECO:0007669"/>
    <property type="project" value="UniProtKB-UniRule"/>
</dbReference>
<dbReference type="Gene3D" id="2.60.175.20">
    <property type="entry name" value="Major capsid L1 (late) superfamily, Papillomavirus"/>
    <property type="match status" value="2"/>
</dbReference>
<dbReference type="HAMAP" id="MF_04002">
    <property type="entry name" value="PPV_L1"/>
    <property type="match status" value="1"/>
</dbReference>
<dbReference type="InterPro" id="IPR002210">
    <property type="entry name" value="Capsid_L1_Papillomavir"/>
</dbReference>
<dbReference type="InterPro" id="IPR036973">
    <property type="entry name" value="Capsid_L1_sf_Papillomavir"/>
</dbReference>
<dbReference type="InterPro" id="IPR011222">
    <property type="entry name" value="dsDNA_vir_gr_I_capsid"/>
</dbReference>
<dbReference type="Pfam" id="PF00500">
    <property type="entry name" value="Late_protein_L1"/>
    <property type="match status" value="1"/>
</dbReference>
<dbReference type="PRINTS" id="PR00865">
    <property type="entry name" value="HPVCAPSIDL1"/>
</dbReference>
<dbReference type="SUPFAM" id="SSF88648">
    <property type="entry name" value="Group I dsDNA viruses"/>
    <property type="match status" value="1"/>
</dbReference>
<organismHost>
    <name type="scientific">Homo sapiens</name>
    <name type="common">Human</name>
    <dbReference type="NCBI Taxonomy" id="9606"/>
</organismHost>
<keyword id="KW-0167">Capsid protein</keyword>
<keyword id="KW-1015">Disulfide bond</keyword>
<keyword id="KW-1048">Host nucleus</keyword>
<keyword id="KW-0945">Host-virus interaction</keyword>
<keyword id="KW-0426">Late protein</keyword>
<keyword id="KW-1185">Reference proteome</keyword>
<keyword id="KW-1145">T=7 icosahedral capsid protein</keyword>
<keyword id="KW-1161">Viral attachment to host cell</keyword>
<keyword id="KW-1162">Viral penetration into host cytoplasm</keyword>
<keyword id="KW-0946">Virion</keyword>
<keyword id="KW-1164">Virus endocytosis by host</keyword>
<keyword id="KW-1160">Virus entry into host cell</keyword>